<keyword id="KW-0002">3D-structure</keyword>
<keyword id="KW-0238">DNA-binding</keyword>
<keyword id="KW-0539">Nucleus</keyword>
<keyword id="KW-0597">Phosphoprotein</keyword>
<keyword id="KW-1185">Reference proteome</keyword>
<keyword id="KW-0678">Repressor</keyword>
<keyword id="KW-0804">Transcription</keyword>
<keyword id="KW-0805">Transcription regulation</keyword>
<protein>
    <recommendedName>
        <fullName>Carbohydrate-responsive element-binding protein</fullName>
        <shortName>ChREBP</shortName>
    </recommendedName>
    <alternativeName>
        <fullName>Class D basic helix-loop-helix protein 14</fullName>
        <shortName>bHLHd14</shortName>
    </alternativeName>
    <alternativeName>
        <fullName>MLX interactor</fullName>
    </alternativeName>
    <alternativeName>
        <fullName>MLX-interacting protein-like</fullName>
    </alternativeName>
    <alternativeName>
        <fullName>WS basic-helix-loop-helix leucine zipper protein</fullName>
        <shortName>WS-bHLH</shortName>
    </alternativeName>
    <alternativeName>
        <fullName>Williams-Beuren syndrome chromosomal region 14 protein</fullName>
    </alternativeName>
</protein>
<reference key="1">
    <citation type="journal article" date="2002" name="J. Biol. Chem.">
        <title>Mechanism for fatty acid 'sparing' effect on glucose-induced transcription: regulation of carbohydrate-responsive element-binding protein by AMP-activated protein kinase.</title>
        <authorList>
            <person name="Kawaguchi T."/>
            <person name="Osatomi K."/>
            <person name="Yamashita H."/>
            <person name="Kabashima T."/>
            <person name="Uyeda K."/>
        </authorList>
    </citation>
    <scope>NUCLEOTIDE SEQUENCE [MRNA]</scope>
    <scope>PHOSPHORYLATION AT SER-568</scope>
    <scope>MUTAGENESIS OF SER-568</scope>
</reference>
<reference key="2">
    <citation type="journal article" date="2012" name="Nat. Commun.">
        <title>Quantitative maps of protein phosphorylation sites across 14 different rat organs and tissues.</title>
        <authorList>
            <person name="Lundby A."/>
            <person name="Secher A."/>
            <person name="Lage K."/>
            <person name="Nordsborg N.B."/>
            <person name="Dmytriyev A."/>
            <person name="Lundby C."/>
            <person name="Olsen J.V."/>
        </authorList>
    </citation>
    <scope>PHOSPHORYLATION [LARGE SCALE ANALYSIS] AT SER-23; SER-25; THR-27 AND SER-615</scope>
    <scope>IDENTIFICATION BY MASS SPECTROMETRY [LARGE SCALE ANALYSIS]</scope>
</reference>
<name>MLXPL_RAT</name>
<sequence>MARALADLSVNLQVPRVVPSPDSDSDTDLEDPSPRRSAGGLHRSQVIHSGHFMVSSPHSDSLTRRRDQEGPVGLADFGPRSIDPTLTRLFECLSLAYSGKLVSPKWKNFKGLKLLCRDKIRLNNAIWRAWYIQYVQRRKSPVCGFVTPLQGSEADEHRKPEAVVLEGNYWKRRIEVVMREYHKWRIYYKKRLRKSSREGDFLAPKQVEGGWPPPERWCEQLFSSVVPVLLGGSEEEPGGRQLLDLDCFLSDISDTLFTMTQPSPSSLQLPSEDAYVGNADMIQPDLTPLQPSLDDFMEISDFFTNYRPPQTPTSSNFPEPPSFGPMADSLFSGGILGPEMPSPASASSSSGMTPLSGNTRLQARNSCSGPLDPSTFPSSEFLLPEDPKTKMPPAPVPTPLLPYPGPVKVHGLEPCTPSPFPTMAPPPALLSEEPLFSARFPFTTVPPAPGVSTLPAPTTFVPTPQPGPGPGPVPFPVDHLPHGYLEPVFGPHFTVPQGVQPRCKPCSPPPGGRKASPPTLTSATASPTATATARDNNPCLTQLLRAAKPEQVLEPSTVPSTLLRPPESPDAVPEIPRVRAFYPPIPAPTPPRPPPGPATLAPPRSLVVPKAERLSPPASSGSERRPSGDLNSIQPPGALSVHLSPPQTVLSRGRVDNNKMENRRITHISAEQKRRFNIKLGFDTLHGLVSTLSAQPSLKVSKATTLQKTAEYILMLQQERAAMQEEAQQLRDEIEELNAAINLCQQQLPATGVPITHQRFDQMRDMFDDYVRTRTLHNWKFWVFSILIRPLFESFNGMVSTASLHSLRQTSLAWLDQYCSLPALRPTVLNSLRQLSTSTSILTDPSLVPEQATRAVTEGPLGRPL</sequence>
<proteinExistence type="evidence at protein level"/>
<accession>Q8VIP2</accession>
<evidence type="ECO:0000250" key="1"/>
<evidence type="ECO:0000250" key="2">
    <source>
        <dbReference type="UniProtKB" id="Q9NP71"/>
    </source>
</evidence>
<evidence type="ECO:0000255" key="3">
    <source>
        <dbReference type="PROSITE-ProRule" id="PRU00981"/>
    </source>
</evidence>
<evidence type="ECO:0000256" key="4">
    <source>
        <dbReference type="SAM" id="MobiDB-lite"/>
    </source>
</evidence>
<evidence type="ECO:0000269" key="5">
    <source>
    </source>
</evidence>
<evidence type="ECO:0007744" key="6">
    <source>
    </source>
</evidence>
<evidence type="ECO:0007829" key="7">
    <source>
        <dbReference type="PDB" id="5F74"/>
    </source>
</evidence>
<gene>
    <name type="primary">Mlxipl</name>
    <name type="synonym">Wbscr14</name>
</gene>
<organism>
    <name type="scientific">Rattus norvegicus</name>
    <name type="common">Rat</name>
    <dbReference type="NCBI Taxonomy" id="10116"/>
    <lineage>
        <taxon>Eukaryota</taxon>
        <taxon>Metazoa</taxon>
        <taxon>Chordata</taxon>
        <taxon>Craniata</taxon>
        <taxon>Vertebrata</taxon>
        <taxon>Euteleostomi</taxon>
        <taxon>Mammalia</taxon>
        <taxon>Eutheria</taxon>
        <taxon>Euarchontoglires</taxon>
        <taxon>Glires</taxon>
        <taxon>Rodentia</taxon>
        <taxon>Myomorpha</taxon>
        <taxon>Muroidea</taxon>
        <taxon>Muridae</taxon>
        <taxon>Murinae</taxon>
        <taxon>Rattus</taxon>
    </lineage>
</organism>
<comment type="function">
    <text evidence="1">Transcriptional repressor. Binds to the canonical and non-canonical E box sequences 5'-CACGTG-3' (By similarity).</text>
</comment>
<comment type="subunit">
    <text evidence="1">Binds DNA as a heterodimer with TCFL4/MLX.</text>
</comment>
<comment type="subcellular location">
    <subcellularLocation>
        <location evidence="3">Nucleus</location>
    </subcellularLocation>
</comment>
<comment type="PTM">
    <text evidence="5">Phosphorylation at Ser-568 by AMPK inactivates the DNA-binding activity.</text>
</comment>
<dbReference type="EMBL" id="AB074517">
    <property type="protein sequence ID" value="BAB77523.1"/>
    <property type="molecule type" value="mRNA"/>
</dbReference>
<dbReference type="RefSeq" id="NP_598236.1">
    <property type="nucleotide sequence ID" value="NM_133552.1"/>
</dbReference>
<dbReference type="PDB" id="5F74">
    <property type="method" value="X-ray"/>
    <property type="resolution" value="2.35 A"/>
    <property type="chains" value="B=1-196"/>
</dbReference>
<dbReference type="PDBsum" id="5F74"/>
<dbReference type="SMR" id="Q8VIP2"/>
<dbReference type="FunCoup" id="Q8VIP2">
    <property type="interactions" value="671"/>
</dbReference>
<dbReference type="GlyGen" id="Q8VIP2">
    <property type="glycosylation" value="3 sites, 1 O-linked glycan (1 site)"/>
</dbReference>
<dbReference type="iPTMnet" id="Q8VIP2"/>
<dbReference type="PhosphoSitePlus" id="Q8VIP2"/>
<dbReference type="GeneID" id="171078"/>
<dbReference type="KEGG" id="rno:171078"/>
<dbReference type="AGR" id="RGD:620400"/>
<dbReference type="CTD" id="51085"/>
<dbReference type="RGD" id="620400">
    <property type="gene designation" value="Mlxipl"/>
</dbReference>
<dbReference type="InParanoid" id="Q8VIP2"/>
<dbReference type="PhylomeDB" id="Q8VIP2"/>
<dbReference type="Reactome" id="R-RNO-163358">
    <property type="pathway name" value="PKA-mediated phosphorylation of key metabolic factors"/>
</dbReference>
<dbReference type="EvolutionaryTrace" id="Q8VIP2"/>
<dbReference type="PRO" id="PR:Q8VIP2"/>
<dbReference type="Proteomes" id="UP000002494">
    <property type="component" value="Unplaced"/>
</dbReference>
<dbReference type="GO" id="GO:0000785">
    <property type="term" value="C:chromatin"/>
    <property type="evidence" value="ECO:0000266"/>
    <property type="project" value="RGD"/>
</dbReference>
<dbReference type="GO" id="GO:0005737">
    <property type="term" value="C:cytoplasm"/>
    <property type="evidence" value="ECO:0000266"/>
    <property type="project" value="RGD"/>
</dbReference>
<dbReference type="GO" id="GO:0005829">
    <property type="term" value="C:cytosol"/>
    <property type="evidence" value="ECO:0000314"/>
    <property type="project" value="BHF-UCL"/>
</dbReference>
<dbReference type="GO" id="GO:0005654">
    <property type="term" value="C:nucleoplasm"/>
    <property type="evidence" value="ECO:0000266"/>
    <property type="project" value="RGD"/>
</dbReference>
<dbReference type="GO" id="GO:0005634">
    <property type="term" value="C:nucleus"/>
    <property type="evidence" value="ECO:0000314"/>
    <property type="project" value="BHF-UCL"/>
</dbReference>
<dbReference type="GO" id="GO:0005667">
    <property type="term" value="C:transcription regulator complex"/>
    <property type="evidence" value="ECO:0000266"/>
    <property type="project" value="RGD"/>
</dbReference>
<dbReference type="GO" id="GO:0035538">
    <property type="term" value="F:carbohydrate response element binding"/>
    <property type="evidence" value="ECO:0000303"/>
    <property type="project" value="BHF-UCL"/>
</dbReference>
<dbReference type="GO" id="GO:0003677">
    <property type="term" value="F:DNA binding"/>
    <property type="evidence" value="ECO:0000314"/>
    <property type="project" value="UniProtKB"/>
</dbReference>
<dbReference type="GO" id="GO:0001216">
    <property type="term" value="F:DNA-binding transcription activator activity"/>
    <property type="evidence" value="ECO:0000266"/>
    <property type="project" value="RGD"/>
</dbReference>
<dbReference type="GO" id="GO:0001228">
    <property type="term" value="F:DNA-binding transcription activator activity, RNA polymerase II-specific"/>
    <property type="evidence" value="ECO:0000266"/>
    <property type="project" value="RGD"/>
</dbReference>
<dbReference type="GO" id="GO:0003700">
    <property type="term" value="F:DNA-binding transcription factor activity"/>
    <property type="evidence" value="ECO:0000314"/>
    <property type="project" value="RGD"/>
</dbReference>
<dbReference type="GO" id="GO:0000981">
    <property type="term" value="F:DNA-binding transcription factor activity, RNA polymerase II-specific"/>
    <property type="evidence" value="ECO:0000266"/>
    <property type="project" value="RGD"/>
</dbReference>
<dbReference type="GO" id="GO:0140297">
    <property type="term" value="F:DNA-binding transcription factor binding"/>
    <property type="evidence" value="ECO:0000266"/>
    <property type="project" value="RGD"/>
</dbReference>
<dbReference type="GO" id="GO:0001227">
    <property type="term" value="F:DNA-binding transcription repressor activity, RNA polymerase II-specific"/>
    <property type="evidence" value="ECO:0000266"/>
    <property type="project" value="RGD"/>
</dbReference>
<dbReference type="GO" id="GO:0046982">
    <property type="term" value="F:protein heterodimerization activity"/>
    <property type="evidence" value="ECO:0000266"/>
    <property type="project" value="RGD"/>
</dbReference>
<dbReference type="GO" id="GO:0019901">
    <property type="term" value="F:protein kinase binding"/>
    <property type="evidence" value="ECO:0000353"/>
    <property type="project" value="UniProtKB"/>
</dbReference>
<dbReference type="GO" id="GO:0000978">
    <property type="term" value="F:RNA polymerase II cis-regulatory region sequence-specific DNA binding"/>
    <property type="evidence" value="ECO:0000266"/>
    <property type="project" value="RGD"/>
</dbReference>
<dbReference type="GO" id="GO:0061629">
    <property type="term" value="F:RNA polymerase II-specific DNA-binding transcription factor binding"/>
    <property type="evidence" value="ECO:0000266"/>
    <property type="project" value="RGD"/>
</dbReference>
<dbReference type="GO" id="GO:0043565">
    <property type="term" value="F:sequence-specific DNA binding"/>
    <property type="evidence" value="ECO:0000314"/>
    <property type="project" value="RGD"/>
</dbReference>
<dbReference type="GO" id="GO:0071333">
    <property type="term" value="P:cellular response to glucose stimulus"/>
    <property type="evidence" value="ECO:0000314"/>
    <property type="project" value="BHF-UCL"/>
</dbReference>
<dbReference type="GO" id="GO:0097009">
    <property type="term" value="P:energy homeostasis"/>
    <property type="evidence" value="ECO:0000315"/>
    <property type="project" value="UniProtKB"/>
</dbReference>
<dbReference type="GO" id="GO:0055089">
    <property type="term" value="P:fatty acid homeostasis"/>
    <property type="evidence" value="ECO:0000315"/>
    <property type="project" value="UniProtKB"/>
</dbReference>
<dbReference type="GO" id="GO:0042593">
    <property type="term" value="P:glucose homeostasis"/>
    <property type="evidence" value="ECO:0000266"/>
    <property type="project" value="RGD"/>
</dbReference>
<dbReference type="GO" id="GO:0010255">
    <property type="term" value="P:glucose mediated signaling pathway"/>
    <property type="evidence" value="ECO:0000266"/>
    <property type="project" value="RGD"/>
</dbReference>
<dbReference type="GO" id="GO:0008610">
    <property type="term" value="P:lipid biosynthetic process"/>
    <property type="evidence" value="ECO:0000266"/>
    <property type="project" value="RGD"/>
</dbReference>
<dbReference type="GO" id="GO:0045892">
    <property type="term" value="P:negative regulation of DNA-templated transcription"/>
    <property type="evidence" value="ECO:0000266"/>
    <property type="project" value="RGD"/>
</dbReference>
<dbReference type="GO" id="GO:0090324">
    <property type="term" value="P:negative regulation of oxidative phosphorylation"/>
    <property type="evidence" value="ECO:0000266"/>
    <property type="project" value="RGD"/>
</dbReference>
<dbReference type="GO" id="GO:1901797">
    <property type="term" value="P:negative regulation of signal transduction by p53 class mediator"/>
    <property type="evidence" value="ECO:0000266"/>
    <property type="project" value="RGD"/>
</dbReference>
<dbReference type="GO" id="GO:0000122">
    <property type="term" value="P:negative regulation of transcription by RNA polymerase II"/>
    <property type="evidence" value="ECO:0000266"/>
    <property type="project" value="RGD"/>
</dbReference>
<dbReference type="GO" id="GO:0008284">
    <property type="term" value="P:positive regulation of cell population proliferation"/>
    <property type="evidence" value="ECO:0000266"/>
    <property type="project" value="RGD"/>
</dbReference>
<dbReference type="GO" id="GO:0045893">
    <property type="term" value="P:positive regulation of DNA-templated transcription"/>
    <property type="evidence" value="ECO:0000266"/>
    <property type="project" value="RGD"/>
</dbReference>
<dbReference type="GO" id="GO:0045723">
    <property type="term" value="P:positive regulation of fatty acid biosynthetic process"/>
    <property type="evidence" value="ECO:0000266"/>
    <property type="project" value="RGD"/>
</dbReference>
<dbReference type="GO" id="GO:0045821">
    <property type="term" value="P:positive regulation of glycolytic process"/>
    <property type="evidence" value="ECO:0000266"/>
    <property type="project" value="RGD"/>
</dbReference>
<dbReference type="GO" id="GO:0046889">
    <property type="term" value="P:positive regulation of lipid biosynthetic process"/>
    <property type="evidence" value="ECO:0000266"/>
    <property type="project" value="RGD"/>
</dbReference>
<dbReference type="GO" id="GO:0045944">
    <property type="term" value="P:positive regulation of transcription by RNA polymerase II"/>
    <property type="evidence" value="ECO:0000266"/>
    <property type="project" value="RGD"/>
</dbReference>
<dbReference type="GO" id="GO:0000432">
    <property type="term" value="P:positive regulation of transcription from RNA polymerase II promoter by glucose"/>
    <property type="evidence" value="ECO:0000266"/>
    <property type="project" value="RGD"/>
</dbReference>
<dbReference type="GO" id="GO:0006110">
    <property type="term" value="P:regulation of glycolytic process"/>
    <property type="evidence" value="ECO:0000314"/>
    <property type="project" value="RGD"/>
</dbReference>
<dbReference type="GO" id="GO:0006357">
    <property type="term" value="P:regulation of transcription by RNA polymerase II"/>
    <property type="evidence" value="ECO:0000314"/>
    <property type="project" value="RGD"/>
</dbReference>
<dbReference type="GO" id="GO:0009749">
    <property type="term" value="P:response to glucose"/>
    <property type="evidence" value="ECO:0000314"/>
    <property type="project" value="RGD"/>
</dbReference>
<dbReference type="GO" id="GO:0007584">
    <property type="term" value="P:response to nutrient"/>
    <property type="evidence" value="ECO:0000270"/>
    <property type="project" value="RGD"/>
</dbReference>
<dbReference type="GO" id="GO:0031667">
    <property type="term" value="P:response to nutrient levels"/>
    <property type="evidence" value="ECO:0000270"/>
    <property type="project" value="RGD"/>
</dbReference>
<dbReference type="GO" id="GO:0033552">
    <property type="term" value="P:response to vitamin B3"/>
    <property type="evidence" value="ECO:0000270"/>
    <property type="project" value="RGD"/>
</dbReference>
<dbReference type="CDD" id="cd19689">
    <property type="entry name" value="bHLHzip_MLXIPL"/>
    <property type="match status" value="1"/>
</dbReference>
<dbReference type="CDD" id="cd21771">
    <property type="entry name" value="NES2-NLS_ChREBP"/>
    <property type="match status" value="1"/>
</dbReference>
<dbReference type="FunFam" id="4.10.280.10:FF:000028">
    <property type="entry name" value="MLX interacting protein like"/>
    <property type="match status" value="1"/>
</dbReference>
<dbReference type="Gene3D" id="4.10.280.10">
    <property type="entry name" value="Helix-loop-helix DNA-binding domain"/>
    <property type="match status" value="1"/>
</dbReference>
<dbReference type="InterPro" id="IPR011598">
    <property type="entry name" value="bHLH_dom"/>
</dbReference>
<dbReference type="InterPro" id="IPR036638">
    <property type="entry name" value="HLH_DNA-bd_sf"/>
</dbReference>
<dbReference type="InterPro" id="IPR052207">
    <property type="entry name" value="Max-like/E-box_TFs"/>
</dbReference>
<dbReference type="PANTHER" id="PTHR15741">
    <property type="entry name" value="BASIC HELIX-LOOP-HELIX ZIP TRANSCRIPTION FACTOR"/>
    <property type="match status" value="1"/>
</dbReference>
<dbReference type="PANTHER" id="PTHR15741:SF14">
    <property type="entry name" value="CARBOHYDRATE-RESPONSIVE ELEMENT-BINDING PROTEIN"/>
    <property type="match status" value="1"/>
</dbReference>
<dbReference type="Pfam" id="PF00010">
    <property type="entry name" value="HLH"/>
    <property type="match status" value="1"/>
</dbReference>
<dbReference type="SMART" id="SM00353">
    <property type="entry name" value="HLH"/>
    <property type="match status" value="1"/>
</dbReference>
<dbReference type="SUPFAM" id="SSF47459">
    <property type="entry name" value="HLH, helix-loop-helix DNA-binding domain"/>
    <property type="match status" value="1"/>
</dbReference>
<dbReference type="PROSITE" id="PS50888">
    <property type="entry name" value="BHLH"/>
    <property type="match status" value="1"/>
</dbReference>
<feature type="chain" id="PRO_0000413065" description="Carbohydrate-responsive element-binding protein">
    <location>
        <begin position="1"/>
        <end position="865"/>
    </location>
</feature>
<feature type="domain" description="bHLH" evidence="3">
    <location>
        <begin position="662"/>
        <end position="716"/>
    </location>
</feature>
<feature type="region of interest" description="Disordered" evidence="4">
    <location>
        <begin position="15"/>
        <end position="41"/>
    </location>
</feature>
<feature type="region of interest" description="Disordered" evidence="4">
    <location>
        <begin position="53"/>
        <end position="77"/>
    </location>
</feature>
<feature type="region of interest" description="Disordered" evidence="4">
    <location>
        <begin position="334"/>
        <end position="392"/>
    </location>
</feature>
<feature type="region of interest" description="Disordered" evidence="4">
    <location>
        <begin position="500"/>
        <end position="653"/>
    </location>
</feature>
<feature type="region of interest" description="Leucine-zipper">
    <location>
        <begin position="716"/>
        <end position="737"/>
    </location>
</feature>
<feature type="compositionally biased region" description="Polar residues" evidence="4">
    <location>
        <begin position="351"/>
        <end position="368"/>
    </location>
</feature>
<feature type="compositionally biased region" description="Low complexity" evidence="4">
    <location>
        <begin position="515"/>
        <end position="533"/>
    </location>
</feature>
<feature type="compositionally biased region" description="Pro residues" evidence="4">
    <location>
        <begin position="583"/>
        <end position="597"/>
    </location>
</feature>
<feature type="modified residue" description="Phosphoserine" evidence="2">
    <location>
        <position position="20"/>
    </location>
</feature>
<feature type="modified residue" description="Phosphoserine" evidence="6">
    <location>
        <position position="23"/>
    </location>
</feature>
<feature type="modified residue" description="Phosphoserine" evidence="6">
    <location>
        <position position="25"/>
    </location>
</feature>
<feature type="modified residue" description="Phosphothreonine" evidence="6">
    <location>
        <position position="27"/>
    </location>
</feature>
<feature type="modified residue" description="Phosphoserine" evidence="2">
    <location>
        <position position="196"/>
    </location>
</feature>
<feature type="modified residue" description="Phosphoserine; by AMPK" evidence="5">
    <location>
        <position position="568"/>
    </location>
</feature>
<feature type="modified residue" description="Phosphoserine" evidence="6">
    <location>
        <position position="615"/>
    </location>
</feature>
<feature type="modified residue" description="Phosphoserine" evidence="2">
    <location>
        <position position="627"/>
    </location>
</feature>
<feature type="modified residue" description="Phosphoserine" evidence="2">
    <location>
        <position position="644"/>
    </location>
</feature>
<feature type="mutagenesis site" description="Impaired DNA-binding and fatty acid sensitivity." evidence="5">
    <original>S</original>
    <variation>A</variation>
    <location>
        <position position="568"/>
    </location>
</feature>
<feature type="helix" evidence="7">
    <location>
        <begin position="118"/>
        <end position="134"/>
    </location>
</feature>